<proteinExistence type="inferred from homology"/>
<feature type="chain" id="PRO_1000086376" description="DNA-directed RNA polymerase subunit beta">
    <location>
        <begin position="1"/>
        <end position="1366"/>
    </location>
</feature>
<gene>
    <name evidence="1" type="primary">rpoB</name>
    <name type="ordered locus">Pnuc_0046</name>
</gene>
<comment type="function">
    <text evidence="1">DNA-dependent RNA polymerase catalyzes the transcription of DNA into RNA using the four ribonucleoside triphosphates as substrates.</text>
</comment>
<comment type="catalytic activity">
    <reaction evidence="1">
        <text>RNA(n) + a ribonucleoside 5'-triphosphate = RNA(n+1) + diphosphate</text>
        <dbReference type="Rhea" id="RHEA:21248"/>
        <dbReference type="Rhea" id="RHEA-COMP:14527"/>
        <dbReference type="Rhea" id="RHEA-COMP:17342"/>
        <dbReference type="ChEBI" id="CHEBI:33019"/>
        <dbReference type="ChEBI" id="CHEBI:61557"/>
        <dbReference type="ChEBI" id="CHEBI:140395"/>
        <dbReference type="EC" id="2.7.7.6"/>
    </reaction>
</comment>
<comment type="subunit">
    <text evidence="1">The RNAP catalytic core consists of 2 alpha, 1 beta, 1 beta' and 1 omega subunit. When a sigma factor is associated with the core the holoenzyme is formed, which can initiate transcription.</text>
</comment>
<comment type="similarity">
    <text evidence="1">Belongs to the RNA polymerase beta chain family.</text>
</comment>
<organism>
    <name type="scientific">Polynucleobacter asymbioticus (strain DSM 18221 / CIP 109841 / QLW-P1DMWA-1)</name>
    <name type="common">Polynucleobacter necessarius subsp. asymbioticus</name>
    <dbReference type="NCBI Taxonomy" id="312153"/>
    <lineage>
        <taxon>Bacteria</taxon>
        <taxon>Pseudomonadati</taxon>
        <taxon>Pseudomonadota</taxon>
        <taxon>Betaproteobacteria</taxon>
        <taxon>Burkholderiales</taxon>
        <taxon>Burkholderiaceae</taxon>
        <taxon>Polynucleobacter</taxon>
    </lineage>
</organism>
<keyword id="KW-0240">DNA-directed RNA polymerase</keyword>
<keyword id="KW-0548">Nucleotidyltransferase</keyword>
<keyword id="KW-1185">Reference proteome</keyword>
<keyword id="KW-0804">Transcription</keyword>
<keyword id="KW-0808">Transferase</keyword>
<accession>A4SUV4</accession>
<protein>
    <recommendedName>
        <fullName evidence="1">DNA-directed RNA polymerase subunit beta</fullName>
        <shortName evidence="1">RNAP subunit beta</shortName>
        <ecNumber evidence="1">2.7.7.6</ecNumber>
    </recommendedName>
    <alternativeName>
        <fullName evidence="1">RNA polymerase subunit beta</fullName>
    </alternativeName>
    <alternativeName>
        <fullName evidence="1">Transcriptase subunit beta</fullName>
    </alternativeName>
</protein>
<sequence>MNYSFTERKRVRKSFAKRVNNHQVPYLIATQLESYAKFLQADKPAMSRLTEGLQAAFTSAFPIVSNNGYARMEYVSYQLSQPPFDVKECQQRGYTYHSALRAKVRLIIYDREAPTKVKEVKESEVYMGEIPLMTENGSFVINGTERVIVSQLHRSPGVFFEHDKGKTHSSGKLLFSARIIPYRGSWLDFEFDPKDILYFRVDRRRKMPVTILLKAIGLNNEQILANFFNFDHFSLTANGGSMEFVPERLRGQLANFDVLDKNGVVVIQKDKRINAKHIRELEAAKTKTIAVPDDYLVGRVVARNIVDPDSGEILAYANDEITEELLATLRDAGIKQLETIYTNDLDSGAYISQTLRTDETADQMAARIAIYRMMRPGEPPTEDAVEALFQRLFYNEDTYDLSRVGRMKVNSRLNRPEMEGPMVLSNEDILDTIKSLVDLRNGKGEVDDIDHLGNRRVRCVGELAENQFRAGLSRVERAVKERLGQAETENLMPHDLINSKPISSAIREFFGSSQLSQFMDQTNPLSEITHKRRISALGPGGLTRERAGFEVRDVHPTHYGRVCPIETPEGPNIGLINSLALFARLNEHGFLETPYRKVSNSKVSDEVVYLSAIEEAKYVIAQANATIDKSGKLADELVSARQAGETIMVSPERIDFIDVAPSQIVSAAASLVPFLEHDDANRALMGANMSRQAVPCLRPDKPLVGTGLERIVAVDSGTVILATRGGIVDYVDANRIVIRVNDDETAAGEVGVDIYNLIKYTRSNQNTNINQRPIVQAGDRVVRGDVVADGASTDLGELALGQNMTVAFMPWNGYNFEDSILISEKVVAEDRYTSIHIEELSVVARDTKLGSEEITRDISNLAESQLSRLDESGIVYIGAEVEAGDVLVGKVTPKGETTLTPEEKLLRAIFGEKASDVKDTSLRVPSGMIGTVIDVQVFTREGIERDARAQAIIQEELQRYRLDLNDQLRIVEGDAFMRLEKLLIGKVANGGPQKLAKGTKIDKEYLASLDKYHWFDVRPADEEVATQVEAIKSSIEAKRKQFDEAFEEKRTKLTQGDDLQAGVTKMVKVYLAVKRRLQPGDKMAGRHGNKGVVSKIAPAEDMPFMADGRPVDIVLNPLGVPSRMNVGQILETHLGWAAQGIGKRIDEMVRQQVKQAELRKFLKQLYNETGRIEDIDNFTDEQITVLAENLRQGLPFATPVFDGATEAEIGRMLELAYPEEVATSLKMTPSRQQMILCDGRTGDQFERPVTVGVMHVLKLHHLVDDKMHARSTGPYSLVTQQPLGGKAQFGGQRFGEMEVWALEAYGASYVLQEMLTVKSDDVAGRTKVYENIVKGEHTIDAGMPESFNVLVKEIRSLGIDIDMERN</sequence>
<dbReference type="EC" id="2.7.7.6" evidence="1"/>
<dbReference type="EMBL" id="CP000655">
    <property type="protein sequence ID" value="ABP33268.1"/>
    <property type="molecule type" value="Genomic_DNA"/>
</dbReference>
<dbReference type="RefSeq" id="WP_011901894.1">
    <property type="nucleotide sequence ID" value="NC_009379.1"/>
</dbReference>
<dbReference type="SMR" id="A4SUV4"/>
<dbReference type="GeneID" id="31480392"/>
<dbReference type="KEGG" id="pnu:Pnuc_0046"/>
<dbReference type="eggNOG" id="COG0085">
    <property type="taxonomic scope" value="Bacteria"/>
</dbReference>
<dbReference type="HOGENOM" id="CLU_000524_4_0_4"/>
<dbReference type="Proteomes" id="UP000000231">
    <property type="component" value="Chromosome"/>
</dbReference>
<dbReference type="GO" id="GO:0000428">
    <property type="term" value="C:DNA-directed RNA polymerase complex"/>
    <property type="evidence" value="ECO:0007669"/>
    <property type="project" value="UniProtKB-KW"/>
</dbReference>
<dbReference type="GO" id="GO:0003677">
    <property type="term" value="F:DNA binding"/>
    <property type="evidence" value="ECO:0007669"/>
    <property type="project" value="UniProtKB-UniRule"/>
</dbReference>
<dbReference type="GO" id="GO:0003899">
    <property type="term" value="F:DNA-directed RNA polymerase activity"/>
    <property type="evidence" value="ECO:0007669"/>
    <property type="project" value="UniProtKB-UniRule"/>
</dbReference>
<dbReference type="GO" id="GO:0032549">
    <property type="term" value="F:ribonucleoside binding"/>
    <property type="evidence" value="ECO:0007669"/>
    <property type="project" value="InterPro"/>
</dbReference>
<dbReference type="GO" id="GO:0006351">
    <property type="term" value="P:DNA-templated transcription"/>
    <property type="evidence" value="ECO:0007669"/>
    <property type="project" value="UniProtKB-UniRule"/>
</dbReference>
<dbReference type="CDD" id="cd00653">
    <property type="entry name" value="RNA_pol_B_RPB2"/>
    <property type="match status" value="1"/>
</dbReference>
<dbReference type="FunFam" id="2.40.50.100:FF:000006">
    <property type="entry name" value="DNA-directed RNA polymerase subunit beta"/>
    <property type="match status" value="1"/>
</dbReference>
<dbReference type="FunFam" id="3.90.1800.10:FF:000001">
    <property type="entry name" value="DNA-directed RNA polymerase subunit beta"/>
    <property type="match status" value="1"/>
</dbReference>
<dbReference type="Gene3D" id="2.40.50.100">
    <property type="match status" value="1"/>
</dbReference>
<dbReference type="Gene3D" id="2.40.50.150">
    <property type="match status" value="1"/>
</dbReference>
<dbReference type="Gene3D" id="3.90.1100.10">
    <property type="match status" value="2"/>
</dbReference>
<dbReference type="Gene3D" id="2.30.150.10">
    <property type="entry name" value="DNA-directed RNA polymerase, beta subunit, external 1 domain"/>
    <property type="match status" value="1"/>
</dbReference>
<dbReference type="Gene3D" id="2.40.270.10">
    <property type="entry name" value="DNA-directed RNA polymerase, subunit 2, domain 6"/>
    <property type="match status" value="1"/>
</dbReference>
<dbReference type="Gene3D" id="3.90.1800.10">
    <property type="entry name" value="RNA polymerase alpha subunit dimerisation domain"/>
    <property type="match status" value="1"/>
</dbReference>
<dbReference type="Gene3D" id="3.90.1110.10">
    <property type="entry name" value="RNA polymerase Rpb2, domain 2"/>
    <property type="match status" value="1"/>
</dbReference>
<dbReference type="HAMAP" id="MF_01321">
    <property type="entry name" value="RNApol_bact_RpoB"/>
    <property type="match status" value="1"/>
</dbReference>
<dbReference type="InterPro" id="IPR042107">
    <property type="entry name" value="DNA-dir_RNA_pol_bsu_ext_1_sf"/>
</dbReference>
<dbReference type="InterPro" id="IPR019462">
    <property type="entry name" value="DNA-dir_RNA_pol_bsu_external_1"/>
</dbReference>
<dbReference type="InterPro" id="IPR015712">
    <property type="entry name" value="DNA-dir_RNA_pol_su2"/>
</dbReference>
<dbReference type="InterPro" id="IPR007120">
    <property type="entry name" value="DNA-dir_RNAP_su2_dom"/>
</dbReference>
<dbReference type="InterPro" id="IPR037033">
    <property type="entry name" value="DNA-dir_RNAP_su2_hyb_sf"/>
</dbReference>
<dbReference type="InterPro" id="IPR010243">
    <property type="entry name" value="RNA_pol_bsu_bac"/>
</dbReference>
<dbReference type="InterPro" id="IPR007121">
    <property type="entry name" value="RNA_pol_bsu_CS"/>
</dbReference>
<dbReference type="InterPro" id="IPR007644">
    <property type="entry name" value="RNA_pol_bsu_protrusion"/>
</dbReference>
<dbReference type="InterPro" id="IPR007642">
    <property type="entry name" value="RNA_pol_Rpb2_2"/>
</dbReference>
<dbReference type="InterPro" id="IPR037034">
    <property type="entry name" value="RNA_pol_Rpb2_2_sf"/>
</dbReference>
<dbReference type="InterPro" id="IPR007645">
    <property type="entry name" value="RNA_pol_Rpb2_3"/>
</dbReference>
<dbReference type="InterPro" id="IPR007641">
    <property type="entry name" value="RNA_pol_Rpb2_7"/>
</dbReference>
<dbReference type="InterPro" id="IPR014724">
    <property type="entry name" value="RNA_pol_RPB2_OB-fold"/>
</dbReference>
<dbReference type="NCBIfam" id="NF001616">
    <property type="entry name" value="PRK00405.1"/>
    <property type="match status" value="1"/>
</dbReference>
<dbReference type="NCBIfam" id="TIGR02013">
    <property type="entry name" value="rpoB"/>
    <property type="match status" value="1"/>
</dbReference>
<dbReference type="PANTHER" id="PTHR20856">
    <property type="entry name" value="DNA-DIRECTED RNA POLYMERASE I SUBUNIT 2"/>
    <property type="match status" value="1"/>
</dbReference>
<dbReference type="Pfam" id="PF04563">
    <property type="entry name" value="RNA_pol_Rpb2_1"/>
    <property type="match status" value="1"/>
</dbReference>
<dbReference type="Pfam" id="PF04561">
    <property type="entry name" value="RNA_pol_Rpb2_2"/>
    <property type="match status" value="2"/>
</dbReference>
<dbReference type="Pfam" id="PF04565">
    <property type="entry name" value="RNA_pol_Rpb2_3"/>
    <property type="match status" value="1"/>
</dbReference>
<dbReference type="Pfam" id="PF10385">
    <property type="entry name" value="RNA_pol_Rpb2_45"/>
    <property type="match status" value="1"/>
</dbReference>
<dbReference type="Pfam" id="PF00562">
    <property type="entry name" value="RNA_pol_Rpb2_6"/>
    <property type="match status" value="1"/>
</dbReference>
<dbReference type="Pfam" id="PF04560">
    <property type="entry name" value="RNA_pol_Rpb2_7"/>
    <property type="match status" value="1"/>
</dbReference>
<dbReference type="SUPFAM" id="SSF64484">
    <property type="entry name" value="beta and beta-prime subunits of DNA dependent RNA-polymerase"/>
    <property type="match status" value="1"/>
</dbReference>
<dbReference type="PROSITE" id="PS01166">
    <property type="entry name" value="RNA_POL_BETA"/>
    <property type="match status" value="1"/>
</dbReference>
<evidence type="ECO:0000255" key="1">
    <source>
        <dbReference type="HAMAP-Rule" id="MF_01321"/>
    </source>
</evidence>
<name>RPOB_POLAQ</name>
<reference key="1">
    <citation type="journal article" date="2012" name="Stand. Genomic Sci.">
        <title>Complete genome sequence of Polynucleobacter necessarius subsp. asymbioticus type strain (QLW-P1DMWA-1(T)).</title>
        <authorList>
            <person name="Meincke L."/>
            <person name="Copeland A."/>
            <person name="Lapidus A."/>
            <person name="Lucas S."/>
            <person name="Berry K.W."/>
            <person name="Del Rio T.G."/>
            <person name="Hammon N."/>
            <person name="Dalin E."/>
            <person name="Tice H."/>
            <person name="Pitluck S."/>
            <person name="Richardson P."/>
            <person name="Bruce D."/>
            <person name="Goodwin L."/>
            <person name="Han C."/>
            <person name="Tapia R."/>
            <person name="Detter J.C."/>
            <person name="Schmutz J."/>
            <person name="Brettin T."/>
            <person name="Larimer F."/>
            <person name="Land M."/>
            <person name="Hauser L."/>
            <person name="Kyrpides N.C."/>
            <person name="Ivanova N."/>
            <person name="Goker M."/>
            <person name="Woyke T."/>
            <person name="Wu Q.L."/>
            <person name="Pockl M."/>
            <person name="Hahn M.W."/>
            <person name="Klenk H.P."/>
        </authorList>
    </citation>
    <scope>NUCLEOTIDE SEQUENCE [LARGE SCALE GENOMIC DNA]</scope>
    <source>
        <strain>DSM 18221 / CIP 109841 / QLW-P1DMWA-1</strain>
    </source>
</reference>